<evidence type="ECO:0000255" key="1">
    <source>
        <dbReference type="HAMAP-Rule" id="MF_00184"/>
    </source>
</evidence>
<evidence type="ECO:0000255" key="2">
    <source>
        <dbReference type="PROSITE-ProRule" id="PRU01228"/>
    </source>
</evidence>
<evidence type="ECO:0000305" key="3"/>
<organism>
    <name type="scientific">Legionella pneumophila subsp. pneumophila (strain Philadelphia 1 / ATCC 33152 / DSM 7513)</name>
    <dbReference type="NCBI Taxonomy" id="272624"/>
    <lineage>
        <taxon>Bacteria</taxon>
        <taxon>Pseudomonadati</taxon>
        <taxon>Pseudomonadota</taxon>
        <taxon>Gammaproteobacteria</taxon>
        <taxon>Legionellales</taxon>
        <taxon>Legionellaceae</taxon>
        <taxon>Legionella</taxon>
    </lineage>
</organism>
<accession>Q5ZS05</accession>
<sequence>MPNVKLPDGNVKHFEAPLTIYDVAHHISPGLAKAAIAGRVDGVLVDTSYLIKEDCSLIIVTEKHEDSLEIIRHSTAHLLAQAVKALFPSAQVTIGPVIEDGFYYDFAFERSFTPDDLSLIEAKMHELAKANLSITRRELPRNEAIQYFKDLGEEYKAKIIADIPENEALSLYRQGDFEDLCRGPHVPSTGFLKAFKLTKVAGAYWRGDSNNEMLQRIYGTAWADKKSLEEYLFRLEEAEKRDHRKLGKALDLFHFQDIAPGMVFWHPKGWTIYQELEHYMRNRLVDFGYQEIRTPQLVDRSLWEKSGHWANFRDEMFVTETENRHYAVKPMSCPCHVQIYNHGLKSYRDLPLRLSEFGNCHRCEPSGALHGLMRVRNMVQDDAHIFCTEDQIQSEVAMMLELVQSVYKDFGFTEIKYRLALRPEKRVGSDDVWDKAETALKLAMQGRNIEWVDAPGEGAFYGPKIECSLSDCLGRIWQCGTIQVDFSMPARLEASYVAEDGSKQTPVMLHRAILGSFERFMGILIEHYAGKLPLWLSPVQAIVLTISEKQNEYAEKVRKTLQKRGIRANFDLRNEKIGFKIREHTLQKIPYLLVVGDKEVENCQVAVRTRDGIDLGVMTIDTICDTLTQEIIRKGSI</sequence>
<gene>
    <name evidence="1" type="primary">thrS</name>
    <name type="ordered locus">lpg2714</name>
</gene>
<feature type="chain" id="PRO_0000100997" description="Threonine--tRNA ligase">
    <location>
        <begin position="1"/>
        <end position="637"/>
    </location>
</feature>
<feature type="domain" description="TGS" evidence="2">
    <location>
        <begin position="1"/>
        <end position="61"/>
    </location>
</feature>
<feature type="region of interest" description="Catalytic" evidence="1">
    <location>
        <begin position="242"/>
        <end position="533"/>
    </location>
</feature>
<feature type="binding site" evidence="1">
    <location>
        <position position="333"/>
    </location>
    <ligand>
        <name>Zn(2+)</name>
        <dbReference type="ChEBI" id="CHEBI:29105"/>
    </ligand>
</feature>
<feature type="binding site" evidence="1">
    <location>
        <position position="384"/>
    </location>
    <ligand>
        <name>Zn(2+)</name>
        <dbReference type="ChEBI" id="CHEBI:29105"/>
    </ligand>
</feature>
<feature type="binding site" evidence="1">
    <location>
        <position position="510"/>
    </location>
    <ligand>
        <name>Zn(2+)</name>
        <dbReference type="ChEBI" id="CHEBI:29105"/>
    </ligand>
</feature>
<name>SYT_LEGPH</name>
<reference key="1">
    <citation type="journal article" date="2004" name="Science">
        <title>The genomic sequence of the accidental pathogen Legionella pneumophila.</title>
        <authorList>
            <person name="Chien M."/>
            <person name="Morozova I."/>
            <person name="Shi S."/>
            <person name="Sheng H."/>
            <person name="Chen J."/>
            <person name="Gomez S.M."/>
            <person name="Asamani G."/>
            <person name="Hill K."/>
            <person name="Nuara J."/>
            <person name="Feder M."/>
            <person name="Rineer J."/>
            <person name="Greenberg J.J."/>
            <person name="Steshenko V."/>
            <person name="Park S.H."/>
            <person name="Zhao B."/>
            <person name="Teplitskaya E."/>
            <person name="Edwards J.R."/>
            <person name="Pampou S."/>
            <person name="Georghiou A."/>
            <person name="Chou I.-C."/>
            <person name="Iannuccilli W."/>
            <person name="Ulz M.E."/>
            <person name="Kim D.H."/>
            <person name="Geringer-Sameth A."/>
            <person name="Goldsberry C."/>
            <person name="Morozov P."/>
            <person name="Fischer S.G."/>
            <person name="Segal G."/>
            <person name="Qu X."/>
            <person name="Rzhetsky A."/>
            <person name="Zhang P."/>
            <person name="Cayanis E."/>
            <person name="De Jong P.J."/>
            <person name="Ju J."/>
            <person name="Kalachikov S."/>
            <person name="Shuman H.A."/>
            <person name="Russo J.J."/>
        </authorList>
    </citation>
    <scope>NUCLEOTIDE SEQUENCE [LARGE SCALE GENOMIC DNA]</scope>
    <source>
        <strain>Philadelphia 1 / ATCC 33152 / DSM 7513</strain>
    </source>
</reference>
<dbReference type="EC" id="6.1.1.3" evidence="1"/>
<dbReference type="EMBL" id="AE017354">
    <property type="protein sequence ID" value="AAU28772.1"/>
    <property type="status" value="ALT_INIT"/>
    <property type="molecule type" value="Genomic_DNA"/>
</dbReference>
<dbReference type="RefSeq" id="WP_015443963.1">
    <property type="nucleotide sequence ID" value="NC_002942.5"/>
</dbReference>
<dbReference type="RefSeq" id="YP_096719.1">
    <property type="nucleotide sequence ID" value="NC_002942.5"/>
</dbReference>
<dbReference type="SMR" id="Q5ZS05"/>
<dbReference type="STRING" id="272624.lpg2714"/>
<dbReference type="PaxDb" id="272624-lpg2714"/>
<dbReference type="GeneID" id="57036716"/>
<dbReference type="KEGG" id="lpn:lpg2714"/>
<dbReference type="PATRIC" id="fig|272624.6.peg.2900"/>
<dbReference type="eggNOG" id="COG0441">
    <property type="taxonomic scope" value="Bacteria"/>
</dbReference>
<dbReference type="HOGENOM" id="CLU_008554_0_1_6"/>
<dbReference type="OrthoDB" id="9802304at2"/>
<dbReference type="Proteomes" id="UP000000609">
    <property type="component" value="Chromosome"/>
</dbReference>
<dbReference type="GO" id="GO:0005737">
    <property type="term" value="C:cytoplasm"/>
    <property type="evidence" value="ECO:0007669"/>
    <property type="project" value="UniProtKB-SubCell"/>
</dbReference>
<dbReference type="GO" id="GO:0005524">
    <property type="term" value="F:ATP binding"/>
    <property type="evidence" value="ECO:0007669"/>
    <property type="project" value="UniProtKB-UniRule"/>
</dbReference>
<dbReference type="GO" id="GO:0046872">
    <property type="term" value="F:metal ion binding"/>
    <property type="evidence" value="ECO:0007669"/>
    <property type="project" value="UniProtKB-KW"/>
</dbReference>
<dbReference type="GO" id="GO:0004829">
    <property type="term" value="F:threonine-tRNA ligase activity"/>
    <property type="evidence" value="ECO:0007669"/>
    <property type="project" value="UniProtKB-UniRule"/>
</dbReference>
<dbReference type="GO" id="GO:0000049">
    <property type="term" value="F:tRNA binding"/>
    <property type="evidence" value="ECO:0007669"/>
    <property type="project" value="UniProtKB-KW"/>
</dbReference>
<dbReference type="GO" id="GO:0006435">
    <property type="term" value="P:threonyl-tRNA aminoacylation"/>
    <property type="evidence" value="ECO:0007669"/>
    <property type="project" value="UniProtKB-UniRule"/>
</dbReference>
<dbReference type="CDD" id="cd01667">
    <property type="entry name" value="TGS_ThrRS"/>
    <property type="match status" value="1"/>
</dbReference>
<dbReference type="CDD" id="cd00860">
    <property type="entry name" value="ThrRS_anticodon"/>
    <property type="match status" value="1"/>
</dbReference>
<dbReference type="CDD" id="cd00771">
    <property type="entry name" value="ThrRS_core"/>
    <property type="match status" value="1"/>
</dbReference>
<dbReference type="FunFam" id="3.10.20.30:FF:000005">
    <property type="entry name" value="Threonine--tRNA ligase"/>
    <property type="match status" value="1"/>
</dbReference>
<dbReference type="FunFam" id="3.30.54.20:FF:000002">
    <property type="entry name" value="Threonine--tRNA ligase"/>
    <property type="match status" value="1"/>
</dbReference>
<dbReference type="FunFam" id="3.30.930.10:FF:000002">
    <property type="entry name" value="Threonine--tRNA ligase"/>
    <property type="match status" value="1"/>
</dbReference>
<dbReference type="FunFam" id="3.40.50.800:FF:000001">
    <property type="entry name" value="Threonine--tRNA ligase"/>
    <property type="match status" value="1"/>
</dbReference>
<dbReference type="FunFam" id="3.30.980.10:FF:000005">
    <property type="entry name" value="Threonyl-tRNA synthetase, mitochondrial"/>
    <property type="match status" value="1"/>
</dbReference>
<dbReference type="Gene3D" id="3.10.20.30">
    <property type="match status" value="1"/>
</dbReference>
<dbReference type="Gene3D" id="3.30.54.20">
    <property type="match status" value="1"/>
</dbReference>
<dbReference type="Gene3D" id="3.40.50.800">
    <property type="entry name" value="Anticodon-binding domain"/>
    <property type="match status" value="1"/>
</dbReference>
<dbReference type="Gene3D" id="3.30.930.10">
    <property type="entry name" value="Bira Bifunctional Protein, Domain 2"/>
    <property type="match status" value="1"/>
</dbReference>
<dbReference type="Gene3D" id="3.30.980.10">
    <property type="entry name" value="Threonyl-trna Synthetase, Chain A, domain 2"/>
    <property type="match status" value="1"/>
</dbReference>
<dbReference type="HAMAP" id="MF_00184">
    <property type="entry name" value="Thr_tRNA_synth"/>
    <property type="match status" value="1"/>
</dbReference>
<dbReference type="InterPro" id="IPR002314">
    <property type="entry name" value="aa-tRNA-synt_IIb"/>
</dbReference>
<dbReference type="InterPro" id="IPR006195">
    <property type="entry name" value="aa-tRNA-synth_II"/>
</dbReference>
<dbReference type="InterPro" id="IPR045864">
    <property type="entry name" value="aa-tRNA-synth_II/BPL/LPL"/>
</dbReference>
<dbReference type="InterPro" id="IPR004154">
    <property type="entry name" value="Anticodon-bd"/>
</dbReference>
<dbReference type="InterPro" id="IPR036621">
    <property type="entry name" value="Anticodon-bd_dom_sf"/>
</dbReference>
<dbReference type="InterPro" id="IPR012675">
    <property type="entry name" value="Beta-grasp_dom_sf"/>
</dbReference>
<dbReference type="InterPro" id="IPR004095">
    <property type="entry name" value="TGS"/>
</dbReference>
<dbReference type="InterPro" id="IPR012676">
    <property type="entry name" value="TGS-like"/>
</dbReference>
<dbReference type="InterPro" id="IPR002320">
    <property type="entry name" value="Thr-tRNA-ligase_IIa"/>
</dbReference>
<dbReference type="InterPro" id="IPR018163">
    <property type="entry name" value="Thr/Ala-tRNA-synth_IIc_edit"/>
</dbReference>
<dbReference type="InterPro" id="IPR047246">
    <property type="entry name" value="ThrRS_anticodon"/>
</dbReference>
<dbReference type="InterPro" id="IPR033728">
    <property type="entry name" value="ThrRS_core"/>
</dbReference>
<dbReference type="InterPro" id="IPR012947">
    <property type="entry name" value="tRNA_SAD"/>
</dbReference>
<dbReference type="NCBIfam" id="TIGR00418">
    <property type="entry name" value="thrS"/>
    <property type="match status" value="1"/>
</dbReference>
<dbReference type="PANTHER" id="PTHR11451:SF44">
    <property type="entry name" value="THREONINE--TRNA LIGASE, CHLOROPLASTIC_MITOCHONDRIAL 2"/>
    <property type="match status" value="1"/>
</dbReference>
<dbReference type="PANTHER" id="PTHR11451">
    <property type="entry name" value="THREONINE-TRNA LIGASE"/>
    <property type="match status" value="1"/>
</dbReference>
<dbReference type="Pfam" id="PF03129">
    <property type="entry name" value="HGTP_anticodon"/>
    <property type="match status" value="1"/>
</dbReference>
<dbReference type="Pfam" id="PF02824">
    <property type="entry name" value="TGS"/>
    <property type="match status" value="1"/>
</dbReference>
<dbReference type="Pfam" id="PF00587">
    <property type="entry name" value="tRNA-synt_2b"/>
    <property type="match status" value="1"/>
</dbReference>
<dbReference type="Pfam" id="PF07973">
    <property type="entry name" value="tRNA_SAD"/>
    <property type="match status" value="1"/>
</dbReference>
<dbReference type="PRINTS" id="PR01047">
    <property type="entry name" value="TRNASYNTHTHR"/>
</dbReference>
<dbReference type="SMART" id="SM00863">
    <property type="entry name" value="tRNA_SAD"/>
    <property type="match status" value="1"/>
</dbReference>
<dbReference type="SUPFAM" id="SSF52954">
    <property type="entry name" value="Class II aaRS ABD-related"/>
    <property type="match status" value="1"/>
</dbReference>
<dbReference type="SUPFAM" id="SSF55681">
    <property type="entry name" value="Class II aaRS and biotin synthetases"/>
    <property type="match status" value="1"/>
</dbReference>
<dbReference type="SUPFAM" id="SSF81271">
    <property type="entry name" value="TGS-like"/>
    <property type="match status" value="1"/>
</dbReference>
<dbReference type="SUPFAM" id="SSF55186">
    <property type="entry name" value="ThrRS/AlaRS common domain"/>
    <property type="match status" value="1"/>
</dbReference>
<dbReference type="PROSITE" id="PS50862">
    <property type="entry name" value="AA_TRNA_LIGASE_II"/>
    <property type="match status" value="1"/>
</dbReference>
<dbReference type="PROSITE" id="PS51880">
    <property type="entry name" value="TGS"/>
    <property type="match status" value="1"/>
</dbReference>
<keyword id="KW-0030">Aminoacyl-tRNA synthetase</keyword>
<keyword id="KW-0067">ATP-binding</keyword>
<keyword id="KW-0963">Cytoplasm</keyword>
<keyword id="KW-0436">Ligase</keyword>
<keyword id="KW-0479">Metal-binding</keyword>
<keyword id="KW-0547">Nucleotide-binding</keyword>
<keyword id="KW-0648">Protein biosynthesis</keyword>
<keyword id="KW-1185">Reference proteome</keyword>
<keyword id="KW-0694">RNA-binding</keyword>
<keyword id="KW-0820">tRNA-binding</keyword>
<keyword id="KW-0862">Zinc</keyword>
<protein>
    <recommendedName>
        <fullName evidence="1">Threonine--tRNA ligase</fullName>
        <ecNumber evidence="1">6.1.1.3</ecNumber>
    </recommendedName>
    <alternativeName>
        <fullName evidence="1">Threonyl-tRNA synthetase</fullName>
        <shortName evidence="1">ThrRS</shortName>
    </alternativeName>
</protein>
<comment type="function">
    <text evidence="1">Catalyzes the attachment of threonine to tRNA(Thr) in a two-step reaction: L-threonine is first activated by ATP to form Thr-AMP and then transferred to the acceptor end of tRNA(Thr). Also edits incorrectly charged L-seryl-tRNA(Thr).</text>
</comment>
<comment type="catalytic activity">
    <reaction evidence="1">
        <text>tRNA(Thr) + L-threonine + ATP = L-threonyl-tRNA(Thr) + AMP + diphosphate + H(+)</text>
        <dbReference type="Rhea" id="RHEA:24624"/>
        <dbReference type="Rhea" id="RHEA-COMP:9670"/>
        <dbReference type="Rhea" id="RHEA-COMP:9704"/>
        <dbReference type="ChEBI" id="CHEBI:15378"/>
        <dbReference type="ChEBI" id="CHEBI:30616"/>
        <dbReference type="ChEBI" id="CHEBI:33019"/>
        <dbReference type="ChEBI" id="CHEBI:57926"/>
        <dbReference type="ChEBI" id="CHEBI:78442"/>
        <dbReference type="ChEBI" id="CHEBI:78534"/>
        <dbReference type="ChEBI" id="CHEBI:456215"/>
        <dbReference type="EC" id="6.1.1.3"/>
    </reaction>
</comment>
<comment type="cofactor">
    <cofactor evidence="1">
        <name>Zn(2+)</name>
        <dbReference type="ChEBI" id="CHEBI:29105"/>
    </cofactor>
    <text evidence="1">Binds 1 zinc ion per subunit.</text>
</comment>
<comment type="subunit">
    <text evidence="1">Homodimer.</text>
</comment>
<comment type="subcellular location">
    <subcellularLocation>
        <location evidence="1">Cytoplasm</location>
    </subcellularLocation>
</comment>
<comment type="similarity">
    <text evidence="1">Belongs to the class-II aminoacyl-tRNA synthetase family.</text>
</comment>
<comment type="sequence caution" evidence="3">
    <conflict type="erroneous initiation">
        <sequence resource="EMBL-CDS" id="AAU28772"/>
    </conflict>
    <text>Extended N-terminus.</text>
</comment>
<proteinExistence type="inferred from homology"/>